<accession>P0A509</accession>
<accession>A0A1R3Y3I1</accession>
<accession>P46401</accession>
<accession>X2BLJ9</accession>
<evidence type="ECO:0000250" key="1">
    <source>
        <dbReference type="UniProtKB" id="P9WPQ3"/>
    </source>
</evidence>
<evidence type="ECO:0000255" key="2">
    <source>
        <dbReference type="PROSITE-ProRule" id="PRU00409"/>
    </source>
</evidence>
<evidence type="ECO:0000255" key="3">
    <source>
        <dbReference type="PROSITE-ProRule" id="PRU00969"/>
    </source>
</evidence>
<evidence type="ECO:0000255" key="4">
    <source>
        <dbReference type="PROSITE-ProRule" id="PRU01066"/>
    </source>
</evidence>
<feature type="chain" id="PRO_0000146796" description="Biotin-dependent 3-methylcrotonyl-coenzyme A carboxylase alpha1 subunit">
    <location>
        <begin position="1"/>
        <end position="654"/>
    </location>
</feature>
<feature type="domain" description="Biotin carboxylation" evidence="3">
    <location>
        <begin position="1"/>
        <end position="448"/>
    </location>
</feature>
<feature type="domain" description="ATP-grasp" evidence="2">
    <location>
        <begin position="120"/>
        <end position="319"/>
    </location>
</feature>
<feature type="domain" description="Biotinyl-binding" evidence="4">
    <location>
        <begin position="578"/>
        <end position="653"/>
    </location>
</feature>
<feature type="binding site" evidence="2">
    <location>
        <begin position="148"/>
        <end position="209"/>
    </location>
    <ligand>
        <name>ATP</name>
        <dbReference type="ChEBI" id="CHEBI:30616"/>
    </ligand>
</feature>
<feature type="binding site" evidence="2">
    <location>
        <position position="275"/>
    </location>
    <ligand>
        <name>Mg(2+)</name>
        <dbReference type="ChEBI" id="CHEBI:18420"/>
        <label>1</label>
    </ligand>
</feature>
<feature type="binding site" evidence="2">
    <location>
        <position position="275"/>
    </location>
    <ligand>
        <name>Mn(2+)</name>
        <dbReference type="ChEBI" id="CHEBI:29035"/>
        <label>1</label>
    </ligand>
</feature>
<feature type="binding site" evidence="2">
    <location>
        <position position="290"/>
    </location>
    <ligand>
        <name>Mg(2+)</name>
        <dbReference type="ChEBI" id="CHEBI:18420"/>
        <label>1</label>
    </ligand>
</feature>
<feature type="binding site" evidence="2">
    <location>
        <position position="290"/>
    </location>
    <ligand>
        <name>Mg(2+)</name>
        <dbReference type="ChEBI" id="CHEBI:18420"/>
        <label>2</label>
    </ligand>
</feature>
<feature type="binding site" evidence="2">
    <location>
        <position position="290"/>
    </location>
    <ligand>
        <name>Mn(2+)</name>
        <dbReference type="ChEBI" id="CHEBI:29035"/>
        <label>1</label>
    </ligand>
</feature>
<feature type="binding site" evidence="2">
    <location>
        <position position="290"/>
    </location>
    <ligand>
        <name>Mn(2+)</name>
        <dbReference type="ChEBI" id="CHEBI:29035"/>
        <label>2</label>
    </ligand>
</feature>
<feature type="binding site" evidence="2">
    <location>
        <position position="292"/>
    </location>
    <ligand>
        <name>Mg(2+)</name>
        <dbReference type="ChEBI" id="CHEBI:18420"/>
        <label>2</label>
    </ligand>
</feature>
<feature type="binding site" evidence="2">
    <location>
        <position position="292"/>
    </location>
    <ligand>
        <name>Mn(2+)</name>
        <dbReference type="ChEBI" id="CHEBI:29035"/>
        <label>2</label>
    </ligand>
</feature>
<feature type="modified residue" description="N6-biotinyllysine" evidence="4">
    <location>
        <position position="620"/>
    </location>
</feature>
<reference key="1">
    <citation type="journal article" date="2003" name="Proc. Natl. Acad. Sci. U.S.A.">
        <title>The complete genome sequence of Mycobacterium bovis.</title>
        <authorList>
            <person name="Garnier T."/>
            <person name="Eiglmeier K."/>
            <person name="Camus J.-C."/>
            <person name="Medina N."/>
            <person name="Mansoor H."/>
            <person name="Pryor M."/>
            <person name="Duthoy S."/>
            <person name="Grondin S."/>
            <person name="Lacroix C."/>
            <person name="Monsempe C."/>
            <person name="Simon S."/>
            <person name="Harris B."/>
            <person name="Atkin R."/>
            <person name="Doggett J."/>
            <person name="Mayes R."/>
            <person name="Keating L."/>
            <person name="Wheeler P.R."/>
            <person name="Parkhill J."/>
            <person name="Barrell B.G."/>
            <person name="Cole S.T."/>
            <person name="Gordon S.V."/>
            <person name="Hewinson R.G."/>
        </authorList>
    </citation>
    <scope>NUCLEOTIDE SEQUENCE [LARGE SCALE GENOMIC DNA]</scope>
    <source>
        <strain>ATCC BAA-935 / AF2122/97</strain>
    </source>
</reference>
<reference key="2">
    <citation type="journal article" date="2017" name="Genome Announc.">
        <title>Updated reference genome sequence and annotation of Mycobacterium bovis AF2122/97.</title>
        <authorList>
            <person name="Malone K.M."/>
            <person name="Farrell D."/>
            <person name="Stuber T.P."/>
            <person name="Schubert O.T."/>
            <person name="Aebersold R."/>
            <person name="Robbe-Austerman S."/>
            <person name="Gordon S.V."/>
        </authorList>
    </citation>
    <scope>NUCLEOTIDE SEQUENCE [LARGE SCALE GENOMIC DNA]</scope>
    <scope>GENOME REANNOTATION</scope>
    <source>
        <strain>ATCC BAA-935 / AF2122/97</strain>
    </source>
</reference>
<organism>
    <name type="scientific">Mycobacterium bovis (strain ATCC BAA-935 / AF2122/97)</name>
    <dbReference type="NCBI Taxonomy" id="233413"/>
    <lineage>
        <taxon>Bacteria</taxon>
        <taxon>Bacillati</taxon>
        <taxon>Actinomycetota</taxon>
        <taxon>Actinomycetes</taxon>
        <taxon>Mycobacteriales</taxon>
        <taxon>Mycobacteriaceae</taxon>
        <taxon>Mycobacterium</taxon>
        <taxon>Mycobacterium tuberculosis complex</taxon>
    </lineage>
</organism>
<proteinExistence type="inferred from homology"/>
<sequence>MFDTVLVANRGEIAVRVIRTLRRLGIRSVAVYSDPDVDARHVLEADAAVRLGPAPARESYLDIGKVLDAAARTGAQAIHPGYGFLAENADFAAACERARVVFLGPPARAIEVMGDKIAAKNAVAAFDVPVVPGVARAGLTDDALVTAAAEVGYPVLIKPSAGGGGKGMRLVQDPARLPEALVSARREAMSSFGDDTLFLERFVLRPRHIEVQVLADAHGNVVHLGERECSLQRRHQKVIEEAPSPLLDPQTRERIGVAACNTARCVDYVGAGTVEFIVSAQRPDEFFFMEMNTRLQVEHPVTEAITGLDLVEWQLRVGAGEKLGFAQNDIELRGHAIEARVYAEDPAREFLPTGGRVLAVFEPAGPGVRVDSSLLGGTVVGSDYDPLLTKVIAHGADREEALDRLDQALARTAVLGVQTNVEFLRFLLADERVRVGDLDTAVLDERSADFTARPAPDDVLAAGGLYRQWALARRAQGDLWAAPSGWRGGGHMAPVRTAMRTPLRSETVSVWGPPESAQVQVGDGEIDCASVQVTREQMSVTISGLRRDYRWAEADRHLWIADERGTWHLREAEEHKIHRAVGARPAEVVSPMPGSVIAVQVESGSQISAGDVVVVVEAMKMEHSLEAPVSGRVQVLVSVGDQVKVEQVLARIKD</sequence>
<keyword id="KW-0067">ATP-binding</keyword>
<keyword id="KW-0092">Biotin</keyword>
<keyword id="KW-0436">Ligase</keyword>
<keyword id="KW-0460">Magnesium</keyword>
<keyword id="KW-0464">Manganese</keyword>
<keyword id="KW-0479">Metal-binding</keyword>
<keyword id="KW-0547">Nucleotide-binding</keyword>
<keyword id="KW-1185">Reference proteome</keyword>
<dbReference type="EC" id="6.3.4.14" evidence="1"/>
<dbReference type="EMBL" id="LT708304">
    <property type="protein sequence ID" value="SIU01145.1"/>
    <property type="molecule type" value="Genomic_DNA"/>
</dbReference>
<dbReference type="RefSeq" id="NP_856174.1">
    <property type="nucleotide sequence ID" value="NC_002945.3"/>
</dbReference>
<dbReference type="RefSeq" id="WP_003899356.1">
    <property type="nucleotide sequence ID" value="NC_002945.4"/>
</dbReference>
<dbReference type="SMR" id="P0A509"/>
<dbReference type="KEGG" id="mbo:BQ2027_MB2529C"/>
<dbReference type="PATRIC" id="fig|233413.5.peg.2784"/>
<dbReference type="UniPathway" id="UPA00363"/>
<dbReference type="Proteomes" id="UP000001419">
    <property type="component" value="Chromosome"/>
</dbReference>
<dbReference type="GO" id="GO:0005524">
    <property type="term" value="F:ATP binding"/>
    <property type="evidence" value="ECO:0007669"/>
    <property type="project" value="UniProtKB-KW"/>
</dbReference>
<dbReference type="GO" id="GO:0004075">
    <property type="term" value="F:biotin carboxylase activity"/>
    <property type="evidence" value="ECO:0007669"/>
    <property type="project" value="UniProtKB-EC"/>
</dbReference>
<dbReference type="GO" id="GO:0046872">
    <property type="term" value="F:metal ion binding"/>
    <property type="evidence" value="ECO:0007669"/>
    <property type="project" value="UniProtKB-KW"/>
</dbReference>
<dbReference type="GO" id="GO:0006552">
    <property type="term" value="P:L-leucine catabolic process"/>
    <property type="evidence" value="ECO:0007669"/>
    <property type="project" value="UniProtKB-UniPathway"/>
</dbReference>
<dbReference type="CDD" id="cd06850">
    <property type="entry name" value="biotinyl_domain"/>
    <property type="match status" value="1"/>
</dbReference>
<dbReference type="FunFam" id="2.40.50.100:FF:000003">
    <property type="entry name" value="Acetyl-CoA carboxylase biotin carboxyl carrier protein"/>
    <property type="match status" value="1"/>
</dbReference>
<dbReference type="FunFam" id="3.30.470.20:FF:000028">
    <property type="entry name" value="Methylcrotonoyl-CoA carboxylase subunit alpha, mitochondrial"/>
    <property type="match status" value="1"/>
</dbReference>
<dbReference type="FunFam" id="3.40.50.20:FF:000010">
    <property type="entry name" value="Propionyl-CoA carboxylase subunit alpha"/>
    <property type="match status" value="1"/>
</dbReference>
<dbReference type="Gene3D" id="2.40.50.100">
    <property type="match status" value="1"/>
</dbReference>
<dbReference type="Gene3D" id="3.30.470.20">
    <property type="entry name" value="ATP-grasp fold, B domain"/>
    <property type="match status" value="1"/>
</dbReference>
<dbReference type="InterPro" id="IPR011761">
    <property type="entry name" value="ATP-grasp"/>
</dbReference>
<dbReference type="InterPro" id="IPR005481">
    <property type="entry name" value="BC-like_N"/>
</dbReference>
<dbReference type="InterPro" id="IPR001882">
    <property type="entry name" value="Biotin_BS"/>
</dbReference>
<dbReference type="InterPro" id="IPR050856">
    <property type="entry name" value="Biotin_carboxylase_complex"/>
</dbReference>
<dbReference type="InterPro" id="IPR011764">
    <property type="entry name" value="Biotin_carboxylation_dom"/>
</dbReference>
<dbReference type="InterPro" id="IPR005482">
    <property type="entry name" value="Biotin_COase_C"/>
</dbReference>
<dbReference type="InterPro" id="IPR000089">
    <property type="entry name" value="Biotin_lipoyl"/>
</dbReference>
<dbReference type="InterPro" id="IPR005479">
    <property type="entry name" value="CbamoylP_synth_lsu-like_ATP-bd"/>
</dbReference>
<dbReference type="InterPro" id="IPR048429">
    <property type="entry name" value="MCC_alpha_BT"/>
</dbReference>
<dbReference type="InterPro" id="IPR016185">
    <property type="entry name" value="PreATP-grasp_dom_sf"/>
</dbReference>
<dbReference type="InterPro" id="IPR011054">
    <property type="entry name" value="Rudment_hybrid_motif"/>
</dbReference>
<dbReference type="InterPro" id="IPR011053">
    <property type="entry name" value="Single_hybrid_motif"/>
</dbReference>
<dbReference type="PANTHER" id="PTHR18866">
    <property type="entry name" value="CARBOXYLASE:PYRUVATE/ACETYL-COA/PROPIONYL-COA CARBOXYLASE"/>
    <property type="match status" value="1"/>
</dbReference>
<dbReference type="PANTHER" id="PTHR18866:SF33">
    <property type="entry name" value="METHYLCROTONOYL-COA CARBOXYLASE SUBUNIT ALPHA, MITOCHONDRIAL-RELATED"/>
    <property type="match status" value="1"/>
</dbReference>
<dbReference type="Pfam" id="PF02785">
    <property type="entry name" value="Biotin_carb_C"/>
    <property type="match status" value="1"/>
</dbReference>
<dbReference type="Pfam" id="PF00289">
    <property type="entry name" value="Biotin_carb_N"/>
    <property type="match status" value="1"/>
</dbReference>
<dbReference type="Pfam" id="PF00364">
    <property type="entry name" value="Biotin_lipoyl"/>
    <property type="match status" value="1"/>
</dbReference>
<dbReference type="Pfam" id="PF21139">
    <property type="entry name" value="BT_MCC_alpha"/>
    <property type="match status" value="1"/>
</dbReference>
<dbReference type="Pfam" id="PF02786">
    <property type="entry name" value="CPSase_L_D2"/>
    <property type="match status" value="1"/>
</dbReference>
<dbReference type="SMART" id="SM00878">
    <property type="entry name" value="Biotin_carb_C"/>
    <property type="match status" value="1"/>
</dbReference>
<dbReference type="SUPFAM" id="SSF56059">
    <property type="entry name" value="Glutathione synthetase ATP-binding domain-like"/>
    <property type="match status" value="1"/>
</dbReference>
<dbReference type="SUPFAM" id="SSF52440">
    <property type="entry name" value="PreATP-grasp domain"/>
    <property type="match status" value="1"/>
</dbReference>
<dbReference type="SUPFAM" id="SSF51246">
    <property type="entry name" value="Rudiment single hybrid motif"/>
    <property type="match status" value="1"/>
</dbReference>
<dbReference type="SUPFAM" id="SSF51230">
    <property type="entry name" value="Single hybrid motif"/>
    <property type="match status" value="1"/>
</dbReference>
<dbReference type="PROSITE" id="PS50975">
    <property type="entry name" value="ATP_GRASP"/>
    <property type="match status" value="1"/>
</dbReference>
<dbReference type="PROSITE" id="PS50979">
    <property type="entry name" value="BC"/>
    <property type="match status" value="1"/>
</dbReference>
<dbReference type="PROSITE" id="PS00188">
    <property type="entry name" value="BIOTIN"/>
    <property type="match status" value="1"/>
</dbReference>
<dbReference type="PROSITE" id="PS50968">
    <property type="entry name" value="BIOTINYL_LIPOYL"/>
    <property type="match status" value="1"/>
</dbReference>
<dbReference type="PROSITE" id="PS00866">
    <property type="entry name" value="CPSASE_1"/>
    <property type="match status" value="1"/>
</dbReference>
<dbReference type="PROSITE" id="PS00867">
    <property type="entry name" value="CPSASE_2"/>
    <property type="match status" value="1"/>
</dbReference>
<protein>
    <recommendedName>
        <fullName evidence="1">Biotin-dependent 3-methylcrotonyl-coenzyme A carboxylase alpha1 subunit</fullName>
    </recommendedName>
    <domain>
        <recommendedName>
            <fullName evidence="1">Biotin carboxylase</fullName>
            <shortName evidence="1">BC</shortName>
            <ecNumber evidence="1">6.3.4.14</ecNumber>
        </recommendedName>
    </domain>
    <domain>
        <recommendedName>
            <fullName evidence="1">Biotin carboxyl carrier protein</fullName>
            <shortName evidence="1">BCCP</shortName>
        </recommendedName>
    </domain>
</protein>
<gene>
    <name type="primary">accA1</name>
    <name type="synonym">bccA</name>
    <name type="ordered locus">BQ2027_MB2529C</name>
</gene>
<name>ACCA1_MYCBO</name>
<comment type="function">
    <text evidence="1">Component of a biotin-dependent acyl-CoA carboxylase complex. This subunit catalyzes the ATP-dependent carboxylation of the biotin carried by the biotin carboxyl carrier (BCC) domain, resulting in the formation of carboxyl biotin. When associated with the beta1 subunit AccD1, is involved in branched amino-acid catabolism with methylcrotonyl coenzyme A as the substrate.</text>
</comment>
<comment type="catalytic activity">
    <reaction evidence="1">
        <text>N(6)-biotinyl-L-lysyl-[protein] + hydrogencarbonate + ATP = N(6)-carboxybiotinyl-L-lysyl-[protein] + ADP + phosphate + H(+)</text>
        <dbReference type="Rhea" id="RHEA:13501"/>
        <dbReference type="Rhea" id="RHEA-COMP:10505"/>
        <dbReference type="Rhea" id="RHEA-COMP:10506"/>
        <dbReference type="ChEBI" id="CHEBI:15378"/>
        <dbReference type="ChEBI" id="CHEBI:17544"/>
        <dbReference type="ChEBI" id="CHEBI:30616"/>
        <dbReference type="ChEBI" id="CHEBI:43474"/>
        <dbReference type="ChEBI" id="CHEBI:83144"/>
        <dbReference type="ChEBI" id="CHEBI:83145"/>
        <dbReference type="ChEBI" id="CHEBI:456216"/>
        <dbReference type="EC" id="6.3.4.14"/>
    </reaction>
    <physiologicalReaction direction="left-to-right" evidence="1">
        <dbReference type="Rhea" id="RHEA:13502"/>
    </physiologicalReaction>
</comment>
<comment type="cofactor">
    <cofactor evidence="2">
        <name>Mg(2+)</name>
        <dbReference type="ChEBI" id="CHEBI:18420"/>
    </cofactor>
    <cofactor evidence="2">
        <name>Mn(2+)</name>
        <dbReference type="ChEBI" id="CHEBI:29035"/>
    </cofactor>
    <text evidence="2">Binds 2 magnesium or manganese ions per subunit.</text>
</comment>
<comment type="cofactor">
    <cofactor evidence="4">
        <name>biotin</name>
        <dbReference type="ChEBI" id="CHEBI:57586"/>
    </cofactor>
</comment>
<comment type="pathway">
    <text evidence="1">Amino-acid degradation; L-leucine degradation.</text>
</comment>
<comment type="subunit">
    <text evidence="1">The biotin-dependent acyl-CoA carboxylase complex is composed of AccA1, which contains the biotin carboxylase (BC) and biotin carboxyl carrier protein (BCCP) domains, and AccD1, which contains the carboxyl transferase (CT) domain. The AccA1/AccD1 complex forms a dodecamer.</text>
</comment>